<comment type="function">
    <text evidence="2">One of the essential components for the initiation of protein synthesis. Protects formylmethionyl-tRNA from spontaneous hydrolysis and promotes its binding to the 30S ribosomal subunits. Also involved in the hydrolysis of GTP during the formation of the 70S ribosomal complex.</text>
</comment>
<comment type="subcellular location">
    <subcellularLocation>
        <location evidence="2">Cytoplasm</location>
    </subcellularLocation>
</comment>
<comment type="similarity">
    <text evidence="2">Belongs to the TRAFAC class translation factor GTPase superfamily. Classic translation factor GTPase family. IF-2 subfamily.</text>
</comment>
<evidence type="ECO:0000250" key="1"/>
<evidence type="ECO:0000255" key="2">
    <source>
        <dbReference type="HAMAP-Rule" id="MF_00100"/>
    </source>
</evidence>
<evidence type="ECO:0000256" key="3">
    <source>
        <dbReference type="SAM" id="MobiDB-lite"/>
    </source>
</evidence>
<gene>
    <name evidence="2" type="primary">infB</name>
    <name type="ordered locus">Swol_0900</name>
</gene>
<protein>
    <recommendedName>
        <fullName evidence="2">Translation initiation factor IF-2</fullName>
    </recommendedName>
</protein>
<accession>Q0AYI8</accession>
<proteinExistence type="inferred from homology"/>
<dbReference type="EMBL" id="CP000448">
    <property type="protein sequence ID" value="ABI68216.1"/>
    <property type="molecule type" value="Genomic_DNA"/>
</dbReference>
<dbReference type="RefSeq" id="WP_011640321.1">
    <property type="nucleotide sequence ID" value="NC_008346.1"/>
</dbReference>
<dbReference type="SMR" id="Q0AYI8"/>
<dbReference type="STRING" id="335541.Swol_0900"/>
<dbReference type="KEGG" id="swo:Swol_0900"/>
<dbReference type="eggNOG" id="COG0532">
    <property type="taxonomic scope" value="Bacteria"/>
</dbReference>
<dbReference type="HOGENOM" id="CLU_006301_9_2_9"/>
<dbReference type="OrthoDB" id="9811804at2"/>
<dbReference type="Proteomes" id="UP000001968">
    <property type="component" value="Chromosome"/>
</dbReference>
<dbReference type="GO" id="GO:0005829">
    <property type="term" value="C:cytosol"/>
    <property type="evidence" value="ECO:0007669"/>
    <property type="project" value="TreeGrafter"/>
</dbReference>
<dbReference type="GO" id="GO:0005525">
    <property type="term" value="F:GTP binding"/>
    <property type="evidence" value="ECO:0007669"/>
    <property type="project" value="UniProtKB-KW"/>
</dbReference>
<dbReference type="GO" id="GO:0003924">
    <property type="term" value="F:GTPase activity"/>
    <property type="evidence" value="ECO:0007669"/>
    <property type="project" value="UniProtKB-UniRule"/>
</dbReference>
<dbReference type="GO" id="GO:0003743">
    <property type="term" value="F:translation initiation factor activity"/>
    <property type="evidence" value="ECO:0007669"/>
    <property type="project" value="UniProtKB-UniRule"/>
</dbReference>
<dbReference type="CDD" id="cd01887">
    <property type="entry name" value="IF2_eIF5B"/>
    <property type="match status" value="1"/>
</dbReference>
<dbReference type="CDD" id="cd03702">
    <property type="entry name" value="IF2_mtIF2_II"/>
    <property type="match status" value="1"/>
</dbReference>
<dbReference type="CDD" id="cd03692">
    <property type="entry name" value="mtIF2_IVc"/>
    <property type="match status" value="1"/>
</dbReference>
<dbReference type="FunFam" id="2.40.30.10:FF:000007">
    <property type="entry name" value="Translation initiation factor IF-2"/>
    <property type="match status" value="1"/>
</dbReference>
<dbReference type="FunFam" id="2.40.30.10:FF:000008">
    <property type="entry name" value="Translation initiation factor IF-2"/>
    <property type="match status" value="1"/>
</dbReference>
<dbReference type="FunFam" id="3.40.50.10050:FF:000001">
    <property type="entry name" value="Translation initiation factor IF-2"/>
    <property type="match status" value="1"/>
</dbReference>
<dbReference type="FunFam" id="3.40.50.300:FF:000019">
    <property type="entry name" value="Translation initiation factor IF-2"/>
    <property type="match status" value="1"/>
</dbReference>
<dbReference type="Gene3D" id="1.10.10.2480">
    <property type="match status" value="1"/>
</dbReference>
<dbReference type="Gene3D" id="3.40.50.300">
    <property type="entry name" value="P-loop containing nucleotide triphosphate hydrolases"/>
    <property type="match status" value="1"/>
</dbReference>
<dbReference type="Gene3D" id="2.40.30.10">
    <property type="entry name" value="Translation factors"/>
    <property type="match status" value="2"/>
</dbReference>
<dbReference type="Gene3D" id="3.40.50.10050">
    <property type="entry name" value="Translation initiation factor IF- 2, domain 3"/>
    <property type="match status" value="1"/>
</dbReference>
<dbReference type="HAMAP" id="MF_00100_B">
    <property type="entry name" value="IF_2_B"/>
    <property type="match status" value="1"/>
</dbReference>
<dbReference type="InterPro" id="IPR053905">
    <property type="entry name" value="EF-G-like_DII"/>
</dbReference>
<dbReference type="InterPro" id="IPR044145">
    <property type="entry name" value="IF2_II"/>
</dbReference>
<dbReference type="InterPro" id="IPR006847">
    <property type="entry name" value="IF2_N"/>
</dbReference>
<dbReference type="InterPro" id="IPR027417">
    <property type="entry name" value="P-loop_NTPase"/>
</dbReference>
<dbReference type="InterPro" id="IPR005225">
    <property type="entry name" value="Small_GTP-bd"/>
</dbReference>
<dbReference type="InterPro" id="IPR000795">
    <property type="entry name" value="T_Tr_GTP-bd_dom"/>
</dbReference>
<dbReference type="InterPro" id="IPR000178">
    <property type="entry name" value="TF_IF2_bacterial-like"/>
</dbReference>
<dbReference type="InterPro" id="IPR015760">
    <property type="entry name" value="TIF_IF2"/>
</dbReference>
<dbReference type="InterPro" id="IPR023115">
    <property type="entry name" value="TIF_IF2_dom3"/>
</dbReference>
<dbReference type="InterPro" id="IPR036925">
    <property type="entry name" value="TIF_IF2_dom3_sf"/>
</dbReference>
<dbReference type="InterPro" id="IPR009000">
    <property type="entry name" value="Transl_B-barrel_sf"/>
</dbReference>
<dbReference type="NCBIfam" id="TIGR00487">
    <property type="entry name" value="IF-2"/>
    <property type="match status" value="1"/>
</dbReference>
<dbReference type="NCBIfam" id="TIGR00231">
    <property type="entry name" value="small_GTP"/>
    <property type="match status" value="1"/>
</dbReference>
<dbReference type="PANTHER" id="PTHR43381:SF5">
    <property type="entry name" value="TR-TYPE G DOMAIN-CONTAINING PROTEIN"/>
    <property type="match status" value="1"/>
</dbReference>
<dbReference type="PANTHER" id="PTHR43381">
    <property type="entry name" value="TRANSLATION INITIATION FACTOR IF-2-RELATED"/>
    <property type="match status" value="1"/>
</dbReference>
<dbReference type="Pfam" id="PF22042">
    <property type="entry name" value="EF-G_D2"/>
    <property type="match status" value="1"/>
</dbReference>
<dbReference type="Pfam" id="PF00009">
    <property type="entry name" value="GTP_EFTU"/>
    <property type="match status" value="1"/>
</dbReference>
<dbReference type="Pfam" id="PF11987">
    <property type="entry name" value="IF-2"/>
    <property type="match status" value="1"/>
</dbReference>
<dbReference type="Pfam" id="PF04760">
    <property type="entry name" value="IF2_N"/>
    <property type="match status" value="2"/>
</dbReference>
<dbReference type="SUPFAM" id="SSF52156">
    <property type="entry name" value="Initiation factor IF2/eIF5b, domain 3"/>
    <property type="match status" value="1"/>
</dbReference>
<dbReference type="SUPFAM" id="SSF52540">
    <property type="entry name" value="P-loop containing nucleoside triphosphate hydrolases"/>
    <property type="match status" value="1"/>
</dbReference>
<dbReference type="SUPFAM" id="SSF50447">
    <property type="entry name" value="Translation proteins"/>
    <property type="match status" value="2"/>
</dbReference>
<dbReference type="PROSITE" id="PS51722">
    <property type="entry name" value="G_TR_2"/>
    <property type="match status" value="1"/>
</dbReference>
<dbReference type="PROSITE" id="PS01176">
    <property type="entry name" value="IF2"/>
    <property type="match status" value="1"/>
</dbReference>
<organism>
    <name type="scientific">Syntrophomonas wolfei subsp. wolfei (strain DSM 2245B / Goettingen)</name>
    <dbReference type="NCBI Taxonomy" id="335541"/>
    <lineage>
        <taxon>Bacteria</taxon>
        <taxon>Bacillati</taxon>
        <taxon>Bacillota</taxon>
        <taxon>Clostridia</taxon>
        <taxon>Eubacteriales</taxon>
        <taxon>Syntrophomonadaceae</taxon>
        <taxon>Syntrophomonas</taxon>
    </lineage>
</organism>
<reference key="1">
    <citation type="journal article" date="2010" name="Environ. Microbiol.">
        <title>The genome of Syntrophomonas wolfei: new insights into syntrophic metabolism and biohydrogen production.</title>
        <authorList>
            <person name="Sieber J.R."/>
            <person name="Sims D.R."/>
            <person name="Han C."/>
            <person name="Kim E."/>
            <person name="Lykidis A."/>
            <person name="Lapidus A.L."/>
            <person name="McDonnald E."/>
            <person name="Rohlin L."/>
            <person name="Culley D.E."/>
            <person name="Gunsalus R."/>
            <person name="McInerney M.J."/>
        </authorList>
    </citation>
    <scope>NUCLEOTIDE SEQUENCE [LARGE SCALE GENOMIC DNA]</scope>
    <source>
        <strain>DSM 2245B / Goettingen</strain>
    </source>
</reference>
<keyword id="KW-0963">Cytoplasm</keyword>
<keyword id="KW-0342">GTP-binding</keyword>
<keyword id="KW-0396">Initiation factor</keyword>
<keyword id="KW-0547">Nucleotide-binding</keyword>
<keyword id="KW-0648">Protein biosynthesis</keyword>
<keyword id="KW-1185">Reference proteome</keyword>
<feature type="chain" id="PRO_1000008366" description="Translation initiation factor IF-2">
    <location>
        <begin position="1"/>
        <end position="882"/>
    </location>
</feature>
<feature type="domain" description="tr-type G">
    <location>
        <begin position="383"/>
        <end position="556"/>
    </location>
</feature>
<feature type="region of interest" description="Disordered" evidence="3">
    <location>
        <begin position="38"/>
        <end position="294"/>
    </location>
</feature>
<feature type="region of interest" description="G1" evidence="1">
    <location>
        <begin position="392"/>
        <end position="399"/>
    </location>
</feature>
<feature type="region of interest" description="G2" evidence="1">
    <location>
        <begin position="417"/>
        <end position="421"/>
    </location>
</feature>
<feature type="region of interest" description="G3" evidence="1">
    <location>
        <begin position="438"/>
        <end position="441"/>
    </location>
</feature>
<feature type="region of interest" description="G4" evidence="1">
    <location>
        <begin position="492"/>
        <end position="495"/>
    </location>
</feature>
<feature type="region of interest" description="G5" evidence="1">
    <location>
        <begin position="528"/>
        <end position="530"/>
    </location>
</feature>
<feature type="compositionally biased region" description="Basic and acidic residues" evidence="3">
    <location>
        <begin position="66"/>
        <end position="76"/>
    </location>
</feature>
<feature type="compositionally biased region" description="Basic and acidic residues" evidence="3">
    <location>
        <begin position="109"/>
        <end position="128"/>
    </location>
</feature>
<feature type="compositionally biased region" description="Basic and acidic residues" evidence="3">
    <location>
        <begin position="207"/>
        <end position="219"/>
    </location>
</feature>
<feature type="compositionally biased region" description="Basic residues" evidence="3">
    <location>
        <begin position="282"/>
        <end position="292"/>
    </location>
</feature>
<feature type="binding site" evidence="2">
    <location>
        <begin position="392"/>
        <end position="399"/>
    </location>
    <ligand>
        <name>GTP</name>
        <dbReference type="ChEBI" id="CHEBI:37565"/>
    </ligand>
</feature>
<feature type="binding site" evidence="2">
    <location>
        <begin position="438"/>
        <end position="442"/>
    </location>
    <ligand>
        <name>GTP</name>
        <dbReference type="ChEBI" id="CHEBI:37565"/>
    </ligand>
</feature>
<feature type="binding site" evidence="2">
    <location>
        <begin position="492"/>
        <end position="495"/>
    </location>
    <ligand>
        <name>GTP</name>
        <dbReference type="ChEBI" id="CHEBI:37565"/>
    </ligand>
</feature>
<name>IF2_SYNWW</name>
<sequence length="882" mass="97143">MAKIRVHELAKELGIASKEMVEVLVELGLDVKNHMSTIEDSQASWVKKRLSKSDEDSKKQPAQPVTRDEAVKKHSGEPATQTTQKKPDNPRHVSGPRPQEGSKPSGSTGRREFSENREQSRKGEERHSANPRPGTQMKSPRNNAPRPTTRPENRSAGATGRTDNRAPGAAGRTDNRAPGAVGRTDNRGAGSASRPDNRVTRPAAGRPDNKGSRPSDAKRPPQRTVPGNTPRPVSSPERTTEKKPGEASRTLPGGAKTAGDKKAFRKNTPAFGQYQSKDYSRPGRKSKHKRKKENIEFQTPENIKIEGSIMVRDLAEKLNKNPAEIMKKLMELGIMATINQNIDFETAEIVSSLYDVKVERELSEEEKILEELVDIDDDAELIARPPVVTIMGHVDHGKTSLLDRIRQANVVSGEAGGITQHIGAYQVTIKNNKITFIDTPGHEAFTAMRARGANLTDIVILVVAADDGVMPQTVEAINHIRAAKVPFLVAINKIDKPQADPERIKQQLTEYNIVPEEWGGDTIFVPVSAKSGEGIENLLEMILLVAEMNEIRANPDRAAYGLVVEGELDKGRGAVATVLVLNGTLNIGDYIICGTNWCRVRAMIDDRGKRVDKALPSMPVEIMGWSGVPEAGGKVQVCDEKVAKEIIGLRLSEKKIEEQKQSSRVSLDEFFQQMKDAEVKELTLIIKGDVQGSVEALRQSLLRLATNEVKVNVIHSAVGAITETDVMLASASNAIIIGFNVRPDSKARKYAEDEKIDVRMYRVIYEAIDDVKKAMSGLLDPEYKEKFLGRAEVRALFKVPHVGVIAGSYVIDGKIQRNASVRVLRDGVIVYEGQLSSLKRFKDDAKEVVENYECGIGIKDFNDVKEGDIIEAYTLEEIPREL</sequence>